<comment type="function">
    <text evidence="1">Acts as an anti-CsrA protein, binds CsrA and prevents it from repressing translation of its target genes, one of which is flagellin. Binds to flagellin and participates in the assembly of the flagellum.</text>
</comment>
<comment type="subunit">
    <text evidence="1">Interacts with translational regulator CsrA and flagellin(s).</text>
</comment>
<comment type="subcellular location">
    <subcellularLocation>
        <location evidence="1">Cytoplasm</location>
    </subcellularLocation>
</comment>
<comment type="similarity">
    <text evidence="1">Belongs to the FliW family.</text>
</comment>
<comment type="sequence caution" evidence="2">
    <conflict type="erroneous initiation">
        <sequence resource="EMBL-CDS" id="ABF85390"/>
    </conflict>
    <text>Extended N-terminus.</text>
</comment>
<name>FLIW2_HELPH</name>
<sequence length="129" mass="14799">MLFDVKAPILGFETIHKMHLQKVDEIFLRLNSAEDNSVVSFTLVNPFALRKYEFEVPTPLKILLELEGAKSVLIANIMVVQTPIELSTVNYLAPLIFNLDKQLMGQVVLDSNKYPHYHLRENILSHTHE</sequence>
<reference key="1">
    <citation type="journal article" date="2006" name="Proc. Natl. Acad. Sci. U.S.A.">
        <title>The complete genome sequence of a chronic atrophic gastritis Helicobacter pylori strain: evolution during disease progression.</title>
        <authorList>
            <person name="Oh J.D."/>
            <person name="Kling-Baeckhed H."/>
            <person name="Giannakis M."/>
            <person name="Xu J."/>
            <person name="Fulton R.S."/>
            <person name="Fulton L.A."/>
            <person name="Cordum H.S."/>
            <person name="Wang C."/>
            <person name="Elliott G."/>
            <person name="Edwards J."/>
            <person name="Mardis E.R."/>
            <person name="Engstrand L.G."/>
            <person name="Gordon J.I."/>
        </authorList>
    </citation>
    <scope>NUCLEOTIDE SEQUENCE [LARGE SCALE GENOMIC DNA]</scope>
    <source>
        <strain>HPAG1</strain>
    </source>
</reference>
<accession>Q1CRN2</accession>
<keyword id="KW-1005">Bacterial flagellum biogenesis</keyword>
<keyword id="KW-0143">Chaperone</keyword>
<keyword id="KW-0963">Cytoplasm</keyword>
<keyword id="KW-0810">Translation regulation</keyword>
<gene>
    <name evidence="1" type="primary">fliW2</name>
    <name type="ordered locus">HPAG1_1323</name>
</gene>
<protein>
    <recommendedName>
        <fullName evidence="1">Flagellar assembly factor FliW 2</fullName>
    </recommendedName>
</protein>
<evidence type="ECO:0000255" key="1">
    <source>
        <dbReference type="HAMAP-Rule" id="MF_01185"/>
    </source>
</evidence>
<evidence type="ECO:0000305" key="2"/>
<dbReference type="EMBL" id="CP000241">
    <property type="protein sequence ID" value="ABF85390.1"/>
    <property type="status" value="ALT_INIT"/>
    <property type="molecule type" value="Genomic_DNA"/>
</dbReference>
<dbReference type="RefSeq" id="WP_011550123.1">
    <property type="nucleotide sequence ID" value="NC_008086.1"/>
</dbReference>
<dbReference type="SMR" id="Q1CRN2"/>
<dbReference type="KEGG" id="hpa:HPAG1_1323"/>
<dbReference type="HOGENOM" id="CLU_112356_2_0_7"/>
<dbReference type="GO" id="GO:0005737">
    <property type="term" value="C:cytoplasm"/>
    <property type="evidence" value="ECO:0007669"/>
    <property type="project" value="UniProtKB-SubCell"/>
</dbReference>
<dbReference type="GO" id="GO:0044780">
    <property type="term" value="P:bacterial-type flagellum assembly"/>
    <property type="evidence" value="ECO:0007669"/>
    <property type="project" value="UniProtKB-UniRule"/>
</dbReference>
<dbReference type="GO" id="GO:0006417">
    <property type="term" value="P:regulation of translation"/>
    <property type="evidence" value="ECO:0007669"/>
    <property type="project" value="UniProtKB-KW"/>
</dbReference>
<dbReference type="Gene3D" id="2.30.290.10">
    <property type="entry name" value="BH3618-like"/>
    <property type="match status" value="1"/>
</dbReference>
<dbReference type="HAMAP" id="MF_01185">
    <property type="entry name" value="FliW"/>
    <property type="match status" value="1"/>
</dbReference>
<dbReference type="InterPro" id="IPR003775">
    <property type="entry name" value="Flagellar_assembly_factor_FliW"/>
</dbReference>
<dbReference type="InterPro" id="IPR024046">
    <property type="entry name" value="Flagellar_assmbl_FliW_dom_sf"/>
</dbReference>
<dbReference type="NCBIfam" id="NF009790">
    <property type="entry name" value="PRK13282.1"/>
    <property type="match status" value="1"/>
</dbReference>
<dbReference type="PANTHER" id="PTHR39190">
    <property type="entry name" value="FLAGELLAR ASSEMBLY FACTOR FLIW"/>
    <property type="match status" value="1"/>
</dbReference>
<dbReference type="PANTHER" id="PTHR39190:SF1">
    <property type="entry name" value="FLAGELLAR ASSEMBLY FACTOR FLIW"/>
    <property type="match status" value="1"/>
</dbReference>
<dbReference type="Pfam" id="PF02623">
    <property type="entry name" value="FliW"/>
    <property type="match status" value="1"/>
</dbReference>
<dbReference type="SUPFAM" id="SSF141457">
    <property type="entry name" value="BH3618-like"/>
    <property type="match status" value="1"/>
</dbReference>
<proteinExistence type="inferred from homology"/>
<feature type="chain" id="PRO_0000272996" description="Flagellar assembly factor FliW 2">
    <location>
        <begin position="1"/>
        <end position="129"/>
    </location>
</feature>
<organism>
    <name type="scientific">Helicobacter pylori (strain HPAG1)</name>
    <dbReference type="NCBI Taxonomy" id="357544"/>
    <lineage>
        <taxon>Bacteria</taxon>
        <taxon>Pseudomonadati</taxon>
        <taxon>Campylobacterota</taxon>
        <taxon>Epsilonproteobacteria</taxon>
        <taxon>Campylobacterales</taxon>
        <taxon>Helicobacteraceae</taxon>
        <taxon>Helicobacter</taxon>
    </lineage>
</organism>